<feature type="chain" id="PRO_0000145736" description="Glyceraldehyde-3-phosphate dehydrogenase">
    <location>
        <begin position="1"/>
        <end position="343"/>
    </location>
</feature>
<feature type="active site" description="Nucleophile" evidence="1">
    <location>
        <position position="141"/>
    </location>
</feature>
<feature type="binding site" evidence="1">
    <location>
        <begin position="13"/>
        <end position="14"/>
    </location>
    <ligand>
        <name>NAD(+)</name>
        <dbReference type="ChEBI" id="CHEBI:57540"/>
    </ligand>
</feature>
<feature type="binding site" evidence="1">
    <location>
        <position position="111"/>
    </location>
    <ligand>
        <name>NAD(+)</name>
        <dbReference type="ChEBI" id="CHEBI:57540"/>
    </ligand>
</feature>
<feature type="binding site" evidence="1">
    <location>
        <begin position="140"/>
        <end position="142"/>
    </location>
    <ligand>
        <name>D-glyceraldehyde 3-phosphate</name>
        <dbReference type="ChEBI" id="CHEBI:59776"/>
    </ligand>
</feature>
<feature type="binding site" evidence="1">
    <location>
        <position position="169"/>
    </location>
    <ligand>
        <name>NAD(+)</name>
        <dbReference type="ChEBI" id="CHEBI:57540"/>
    </ligand>
</feature>
<feature type="binding site" evidence="1">
    <location>
        <begin position="195"/>
        <end position="196"/>
    </location>
    <ligand>
        <name>D-glyceraldehyde 3-phosphate</name>
        <dbReference type="ChEBI" id="CHEBI:59776"/>
    </ligand>
</feature>
<feature type="binding site" evidence="1">
    <location>
        <position position="303"/>
    </location>
    <ligand>
        <name>NAD(+)</name>
        <dbReference type="ChEBI" id="CHEBI:57540"/>
    </ligand>
</feature>
<comment type="catalytic activity">
    <reaction evidence="1">
        <text>D-glyceraldehyde 3-phosphate + phosphate + NADP(+) = (2R)-3-phospho-glyceroyl phosphate + NADPH + H(+)</text>
        <dbReference type="Rhea" id="RHEA:10296"/>
        <dbReference type="ChEBI" id="CHEBI:15378"/>
        <dbReference type="ChEBI" id="CHEBI:43474"/>
        <dbReference type="ChEBI" id="CHEBI:57604"/>
        <dbReference type="ChEBI" id="CHEBI:57783"/>
        <dbReference type="ChEBI" id="CHEBI:58349"/>
        <dbReference type="ChEBI" id="CHEBI:59776"/>
        <dbReference type="EC" id="1.2.1.59"/>
    </reaction>
</comment>
<comment type="catalytic activity">
    <reaction evidence="1">
        <text>D-glyceraldehyde 3-phosphate + phosphate + NAD(+) = (2R)-3-phospho-glyceroyl phosphate + NADH + H(+)</text>
        <dbReference type="Rhea" id="RHEA:10300"/>
        <dbReference type="ChEBI" id="CHEBI:15378"/>
        <dbReference type="ChEBI" id="CHEBI:43474"/>
        <dbReference type="ChEBI" id="CHEBI:57540"/>
        <dbReference type="ChEBI" id="CHEBI:57604"/>
        <dbReference type="ChEBI" id="CHEBI:57945"/>
        <dbReference type="ChEBI" id="CHEBI:59776"/>
        <dbReference type="EC" id="1.2.1.59"/>
    </reaction>
</comment>
<comment type="pathway">
    <text evidence="1">Carbohydrate degradation; glycolysis; pyruvate from D-glyceraldehyde 3-phosphate: step 1/5.</text>
</comment>
<comment type="subunit">
    <text evidence="1">Homotetramer.</text>
</comment>
<comment type="subcellular location">
    <subcellularLocation>
        <location evidence="1">Cytoplasm</location>
    </subcellularLocation>
</comment>
<comment type="similarity">
    <text evidence="1">Belongs to the glyceraldehyde-3-phosphate dehydrogenase family.</text>
</comment>
<dbReference type="EC" id="1.2.1.59" evidence="1"/>
<dbReference type="EMBL" id="BA000023">
    <property type="protein sequence ID" value="BAB66418.1"/>
    <property type="molecule type" value="Genomic_DNA"/>
</dbReference>
<dbReference type="RefSeq" id="WP_010979396.1">
    <property type="nucleotide sequence ID" value="NC_003106.2"/>
</dbReference>
<dbReference type="SMR" id="Q971K2"/>
<dbReference type="MINT" id="Q971K2"/>
<dbReference type="STRING" id="273063.STK_13560"/>
<dbReference type="KEGG" id="sto:STK_13560"/>
<dbReference type="PATRIC" id="fig|273063.9.peg.1550"/>
<dbReference type="eggNOG" id="arCOG00493">
    <property type="taxonomic scope" value="Archaea"/>
</dbReference>
<dbReference type="OrthoDB" id="295712at2157"/>
<dbReference type="BRENDA" id="1.2.1.59">
    <property type="organism ID" value="15396"/>
</dbReference>
<dbReference type="UniPathway" id="UPA00109">
    <property type="reaction ID" value="UER00184"/>
</dbReference>
<dbReference type="Proteomes" id="UP000001015">
    <property type="component" value="Chromosome"/>
</dbReference>
<dbReference type="GO" id="GO:0005737">
    <property type="term" value="C:cytoplasm"/>
    <property type="evidence" value="ECO:0007669"/>
    <property type="project" value="UniProtKB-SubCell"/>
</dbReference>
<dbReference type="GO" id="GO:0008839">
    <property type="term" value="F:4-hydroxy-tetrahydrodipicolinate reductase"/>
    <property type="evidence" value="ECO:0007669"/>
    <property type="project" value="InterPro"/>
</dbReference>
<dbReference type="GO" id="GO:0004365">
    <property type="term" value="F:glyceraldehyde-3-phosphate dehydrogenase (NAD+) (phosphorylating) activity"/>
    <property type="evidence" value="ECO:0007669"/>
    <property type="project" value="UniProtKB-UniRule"/>
</dbReference>
<dbReference type="GO" id="GO:0047100">
    <property type="term" value="F:glyceraldehyde-3-phosphate dehydrogenase (NADP+) (phosphorylating) activity"/>
    <property type="evidence" value="ECO:0007669"/>
    <property type="project" value="RHEA"/>
</dbReference>
<dbReference type="GO" id="GO:0051287">
    <property type="term" value="F:NAD binding"/>
    <property type="evidence" value="ECO:0007669"/>
    <property type="project" value="InterPro"/>
</dbReference>
<dbReference type="GO" id="GO:0050661">
    <property type="term" value="F:NADP binding"/>
    <property type="evidence" value="ECO:0007669"/>
    <property type="project" value="InterPro"/>
</dbReference>
<dbReference type="GO" id="GO:0006096">
    <property type="term" value="P:glycolytic process"/>
    <property type="evidence" value="ECO:0007669"/>
    <property type="project" value="UniProtKB-UniRule"/>
</dbReference>
<dbReference type="GO" id="GO:0009089">
    <property type="term" value="P:lysine biosynthetic process via diaminopimelate"/>
    <property type="evidence" value="ECO:0007669"/>
    <property type="project" value="InterPro"/>
</dbReference>
<dbReference type="CDD" id="cd18127">
    <property type="entry name" value="GAPDH_II_C"/>
    <property type="match status" value="1"/>
</dbReference>
<dbReference type="CDD" id="cd02278">
    <property type="entry name" value="GAPDH_II_N"/>
    <property type="match status" value="1"/>
</dbReference>
<dbReference type="Gene3D" id="3.30.360.10">
    <property type="entry name" value="Dihydrodipicolinate Reductase, domain 2"/>
    <property type="match status" value="1"/>
</dbReference>
<dbReference type="Gene3D" id="3.40.50.720">
    <property type="entry name" value="NAD(P)-binding Rossmann-like Domain"/>
    <property type="match status" value="1"/>
</dbReference>
<dbReference type="HAMAP" id="MF_00559">
    <property type="entry name" value="G3P_dehdrog_arch"/>
    <property type="match status" value="1"/>
</dbReference>
<dbReference type="InterPro" id="IPR000846">
    <property type="entry name" value="DapB_N"/>
</dbReference>
<dbReference type="InterPro" id="IPR020831">
    <property type="entry name" value="GlycerAld/Erythrose_P_DH"/>
</dbReference>
<dbReference type="InterPro" id="IPR020830">
    <property type="entry name" value="GlycerAld_3-P_DH_AS"/>
</dbReference>
<dbReference type="InterPro" id="IPR020829">
    <property type="entry name" value="GlycerAld_3-P_DH_cat"/>
</dbReference>
<dbReference type="InterPro" id="IPR020828">
    <property type="entry name" value="GlycerAld_3-P_DH_NAD(P)-bd"/>
</dbReference>
<dbReference type="InterPro" id="IPR006436">
    <property type="entry name" value="Glyceraldehyde-3-P_DH_2_arc"/>
</dbReference>
<dbReference type="InterPro" id="IPR036291">
    <property type="entry name" value="NAD(P)-bd_dom_sf"/>
</dbReference>
<dbReference type="NCBIfam" id="TIGR01546">
    <property type="entry name" value="GAPDH-II_archae"/>
    <property type="match status" value="1"/>
</dbReference>
<dbReference type="NCBIfam" id="NF003251">
    <property type="entry name" value="PRK04207.1"/>
    <property type="match status" value="1"/>
</dbReference>
<dbReference type="Pfam" id="PF01113">
    <property type="entry name" value="DapB_N"/>
    <property type="match status" value="1"/>
</dbReference>
<dbReference type="Pfam" id="PF02800">
    <property type="entry name" value="Gp_dh_C"/>
    <property type="match status" value="1"/>
</dbReference>
<dbReference type="PIRSF" id="PIRSF000149">
    <property type="entry name" value="GAP_DH"/>
    <property type="match status" value="1"/>
</dbReference>
<dbReference type="SMART" id="SM00846">
    <property type="entry name" value="Gp_dh_N"/>
    <property type="match status" value="1"/>
</dbReference>
<dbReference type="SUPFAM" id="SSF55347">
    <property type="entry name" value="Glyceraldehyde-3-phosphate dehydrogenase-like, C-terminal domain"/>
    <property type="match status" value="1"/>
</dbReference>
<dbReference type="SUPFAM" id="SSF51735">
    <property type="entry name" value="NAD(P)-binding Rossmann-fold domains"/>
    <property type="match status" value="1"/>
</dbReference>
<dbReference type="PROSITE" id="PS00071">
    <property type="entry name" value="GAPDH"/>
    <property type="match status" value="1"/>
</dbReference>
<sequence>MEKVKVAVNGYGTIGKRVADAIRLQPDMELIGVGKTSPNYEAIIADKKGIKIYTVKDNIGKFEKSGIRVAGTIEDMVKEADIVVDTTPNGVGATYKPLYQSLGKNALFQGGEKADVADISFSALCNYDEAKGKKYIRVVSCNTTGMLRIICTMNKISKVEKVRATIVRRAADPKEVKRGPINSIVPDPASVPSHHAKDVLTVIKGIDIVTMAVIAPTTLMHLHTMVLTVKDKVNRDDIINTFLNTPRIILVNSSRTTVSSTAEIIEVSRDMGRVRYDIPEVVVFEDSIYTNGNEVFLMYGVHQESIVVPENIDAIRASLGLMGKEESIKVTNDTLGIMKGYLL</sequence>
<organism>
    <name type="scientific">Sulfurisphaera tokodaii (strain DSM 16993 / JCM 10545 / NBRC 100140 / 7)</name>
    <name type="common">Sulfolobus tokodaii</name>
    <dbReference type="NCBI Taxonomy" id="273063"/>
    <lineage>
        <taxon>Archaea</taxon>
        <taxon>Thermoproteota</taxon>
        <taxon>Thermoprotei</taxon>
        <taxon>Sulfolobales</taxon>
        <taxon>Sulfolobaceae</taxon>
        <taxon>Sulfurisphaera</taxon>
    </lineage>
</organism>
<evidence type="ECO:0000255" key="1">
    <source>
        <dbReference type="HAMAP-Rule" id="MF_00559"/>
    </source>
</evidence>
<name>G3P_SULTO</name>
<keyword id="KW-0963">Cytoplasm</keyword>
<keyword id="KW-0324">Glycolysis</keyword>
<keyword id="KW-0520">NAD</keyword>
<keyword id="KW-0521">NADP</keyword>
<keyword id="KW-0560">Oxidoreductase</keyword>
<keyword id="KW-1185">Reference proteome</keyword>
<gene>
    <name evidence="1" type="primary">gap</name>
    <name type="ordered locus">STK_13560</name>
</gene>
<protein>
    <recommendedName>
        <fullName evidence="1">Glyceraldehyde-3-phosphate dehydrogenase</fullName>
        <shortName evidence="1">GAPDH</shortName>
        <ecNumber evidence="1">1.2.1.59</ecNumber>
    </recommendedName>
    <alternativeName>
        <fullName evidence="1">NAD(P)-dependent glyceraldehyde-3-phosphate dehydrogenase</fullName>
    </alternativeName>
</protein>
<accession>Q971K2</accession>
<proteinExistence type="inferred from homology"/>
<reference key="1">
    <citation type="journal article" date="2001" name="DNA Res.">
        <title>Complete genome sequence of an aerobic thermoacidophilic Crenarchaeon, Sulfolobus tokodaii strain7.</title>
        <authorList>
            <person name="Kawarabayasi Y."/>
            <person name="Hino Y."/>
            <person name="Horikawa H."/>
            <person name="Jin-no K."/>
            <person name="Takahashi M."/>
            <person name="Sekine M."/>
            <person name="Baba S."/>
            <person name="Ankai A."/>
            <person name="Kosugi H."/>
            <person name="Hosoyama A."/>
            <person name="Fukui S."/>
            <person name="Nagai Y."/>
            <person name="Nishijima K."/>
            <person name="Otsuka R."/>
            <person name="Nakazawa H."/>
            <person name="Takamiya M."/>
            <person name="Kato Y."/>
            <person name="Yoshizawa T."/>
            <person name="Tanaka T."/>
            <person name="Kudoh Y."/>
            <person name="Yamazaki J."/>
            <person name="Kushida N."/>
            <person name="Oguchi A."/>
            <person name="Aoki K."/>
            <person name="Masuda S."/>
            <person name="Yanagii M."/>
            <person name="Nishimura M."/>
            <person name="Yamagishi A."/>
            <person name="Oshima T."/>
            <person name="Kikuchi H."/>
        </authorList>
    </citation>
    <scope>NUCLEOTIDE SEQUENCE [LARGE SCALE GENOMIC DNA]</scope>
    <source>
        <strain>DSM 16993 / JCM 10545 / NBRC 100140 / 7</strain>
    </source>
</reference>